<sequence length="580" mass="64077">MPEFRVWAPKPALVRLDVNGAVHAMTRSADGWWHTTVAAPADARYGYLLDDDPTVLPDPRSARQPDGVHARSQRWEPPGQFGAARTDTGWPGRSVEGAVIYELHIGTFTTAGTFDAAIEKLDYLVDLGIDFVELMPVNSFAGTRGWGYDGVLWYSVHEPYGGPDGLVRFIDACHARRLGVLIDAVFNHLGPSGNYLPRFGPYLSSASNPWGDGINIAGADSDEVRHYIIDCALRWMRDFHADGLRLDAVHALVDTTAVHVLEELANATRWLSGQLGRPLSLIAETDRNDPRLITRPSHGGYGITAQWNDDIHHAIHTAVSGERQGYYADFGSLATLAYTLRNGYFHAGTYSSFRRRRHGRALDTSAIPATRLLAYTCTHDQVGNRALGDRPSQYLTGGQLAIKAALTLGSPYTAMLFMGEEWGASSPFQFFCSHPEPELAHSTVAGRKEEFAEHGWAADDIPDPQDPQTFQRCKLNWAEAGSGEHARLHRFYRDLIALRHNEADLADPWLDHLMVDYDEQQRWVVMRRGQLMIACNLGAEPTCVPVSGELVLAWESPIIGDNSTELAAYSLAILRAAEPA</sequence>
<reference key="1">
    <citation type="journal article" date="1998" name="Nature">
        <title>Deciphering the biology of Mycobacterium tuberculosis from the complete genome sequence.</title>
        <authorList>
            <person name="Cole S.T."/>
            <person name="Brosch R."/>
            <person name="Parkhill J."/>
            <person name="Garnier T."/>
            <person name="Churcher C.M."/>
            <person name="Harris D.E."/>
            <person name="Gordon S.V."/>
            <person name="Eiglmeier K."/>
            <person name="Gas S."/>
            <person name="Barry C.E. III"/>
            <person name="Tekaia F."/>
            <person name="Badcock K."/>
            <person name="Basham D."/>
            <person name="Brown D."/>
            <person name="Chillingworth T."/>
            <person name="Connor R."/>
            <person name="Davies R.M."/>
            <person name="Devlin K."/>
            <person name="Feltwell T."/>
            <person name="Gentles S."/>
            <person name="Hamlin N."/>
            <person name="Holroyd S."/>
            <person name="Hornsby T."/>
            <person name="Jagels K."/>
            <person name="Krogh A."/>
            <person name="McLean J."/>
            <person name="Moule S."/>
            <person name="Murphy L.D."/>
            <person name="Oliver S."/>
            <person name="Osborne J."/>
            <person name="Quail M.A."/>
            <person name="Rajandream M.A."/>
            <person name="Rogers J."/>
            <person name="Rutter S."/>
            <person name="Seeger K."/>
            <person name="Skelton S."/>
            <person name="Squares S."/>
            <person name="Squares R."/>
            <person name="Sulston J.E."/>
            <person name="Taylor K."/>
            <person name="Whitehead S."/>
            <person name="Barrell B.G."/>
        </authorList>
    </citation>
    <scope>NUCLEOTIDE SEQUENCE [LARGE SCALE GENOMIC DNA]</scope>
    <source>
        <strain>ATCC 25618 / H37Rv</strain>
    </source>
</reference>
<reference key="2">
    <citation type="journal article" date="2000" name="Microbiology">
        <title>Three pathways for trehalose biosynthesis in mycobacteria.</title>
        <authorList>
            <person name="De Smet K.A."/>
            <person name="Weston A."/>
            <person name="Brown I.N."/>
            <person name="Young D.B."/>
            <person name="Robertson B.D."/>
        </authorList>
    </citation>
    <scope>FUNCTION IN TREHALOSE BIOSYNTHESIS</scope>
</reference>
<reference key="3">
    <citation type="journal article" date="2008" name="Mol. Microbiol.">
        <title>Capsular glucan and intracellular glycogen of Mycobacterium tuberculosis: biosynthesis and impact on the persistence in mice.</title>
        <authorList>
            <person name="Sambou T."/>
            <person name="Dinadayala P."/>
            <person name="Stadthagen G."/>
            <person name="Barilone N."/>
            <person name="Bordat Y."/>
            <person name="Constant P."/>
            <person name="Levillain F."/>
            <person name="Neyrolles O."/>
            <person name="Gicquel B."/>
            <person name="Lemassu A."/>
            <person name="Daffe M."/>
            <person name="Jackson M."/>
        </authorList>
    </citation>
    <scope>DISRUPTION PHENOTYPE</scope>
    <source>
        <strain>ATCC 25618 / H37Rv</strain>
    </source>
</reference>
<reference key="4">
    <citation type="journal article" date="2011" name="Mol. Cell. Proteomics">
        <title>Proteogenomic analysis of Mycobacterium tuberculosis by high resolution mass spectrometry.</title>
        <authorList>
            <person name="Kelkar D.S."/>
            <person name="Kumar D."/>
            <person name="Kumar P."/>
            <person name="Balakrishnan L."/>
            <person name="Muthusamy B."/>
            <person name="Yadav A.K."/>
            <person name="Shrivastava P."/>
            <person name="Marimuthu A."/>
            <person name="Anand S."/>
            <person name="Sundaram H."/>
            <person name="Kingsbury R."/>
            <person name="Harsha H.C."/>
            <person name="Nair B."/>
            <person name="Prasad T.S."/>
            <person name="Chauhan D.S."/>
            <person name="Katoch K."/>
            <person name="Katoch V.M."/>
            <person name="Kumar P."/>
            <person name="Chaerkady R."/>
            <person name="Ramachandran S."/>
            <person name="Dash D."/>
            <person name="Pandey A."/>
        </authorList>
    </citation>
    <scope>IDENTIFICATION BY MASS SPECTROMETRY [LARGE SCALE ANALYSIS]</scope>
    <source>
        <strain>ATCC 25618 / H37Rv</strain>
    </source>
</reference>
<feature type="chain" id="PRO_0000054324" description="Malto-oligosyltrehalose trehalohydrolase">
    <location>
        <begin position="1"/>
        <end position="580"/>
    </location>
</feature>
<feature type="region of interest" description="Disordered" evidence="3">
    <location>
        <begin position="56"/>
        <end position="88"/>
    </location>
</feature>
<feature type="compositionally biased region" description="Basic and acidic residues" evidence="3">
    <location>
        <begin position="60"/>
        <end position="69"/>
    </location>
</feature>
<feature type="active site" description="Nucleophile" evidence="2">
    <location>
        <position position="247"/>
    </location>
</feature>
<feature type="active site" description="Proton donor" evidence="2">
    <location>
        <position position="284"/>
    </location>
</feature>
<feature type="binding site" evidence="2">
    <location>
        <begin position="245"/>
        <end position="250"/>
    </location>
    <ligand>
        <name>substrate</name>
    </ligand>
</feature>
<feature type="binding site" evidence="2">
    <location>
        <begin position="309"/>
        <end position="313"/>
    </location>
    <ligand>
        <name>substrate</name>
    </ligand>
</feature>
<feature type="binding site" evidence="2">
    <location>
        <begin position="379"/>
        <end position="384"/>
    </location>
    <ligand>
        <name>substrate</name>
    </ligand>
</feature>
<feature type="site" description="Transition state stabilizer" evidence="2">
    <location>
        <position position="380"/>
    </location>
</feature>
<evidence type="ECO:0000250" key="1"/>
<evidence type="ECO:0000250" key="2">
    <source>
        <dbReference type="UniProtKB" id="Q55088"/>
    </source>
</evidence>
<evidence type="ECO:0000256" key="3">
    <source>
        <dbReference type="SAM" id="MobiDB-lite"/>
    </source>
</evidence>
<evidence type="ECO:0000269" key="4">
    <source>
    </source>
</evidence>
<evidence type="ECO:0000269" key="5">
    <source>
    </source>
</evidence>
<evidence type="ECO:0000305" key="6"/>
<name>TREZ_MYCTU</name>
<organism>
    <name type="scientific">Mycobacterium tuberculosis (strain ATCC 25618 / H37Rv)</name>
    <dbReference type="NCBI Taxonomy" id="83332"/>
    <lineage>
        <taxon>Bacteria</taxon>
        <taxon>Bacillati</taxon>
        <taxon>Actinomycetota</taxon>
        <taxon>Actinomycetes</taxon>
        <taxon>Mycobacteriales</taxon>
        <taxon>Mycobacteriaceae</taxon>
        <taxon>Mycobacterium</taxon>
        <taxon>Mycobacterium tuberculosis complex</taxon>
    </lineage>
</organism>
<comment type="function">
    <text evidence="4">Is involved in the biosynthesis of trehalose but not in that of capsular glucan and glycogen.</text>
</comment>
<comment type="catalytic activity">
    <reaction evidence="2">
        <text>hydrolysis of (1-&gt;4)-alpha-D-glucosidic linkage in 4-alpha-D-[(1-&gt;4)-alpha-D-glucanosyl]n trehalose to yield trehalose and (1-&gt;4)-alpha-D-glucan.</text>
        <dbReference type="EC" id="3.2.1.141"/>
    </reaction>
</comment>
<comment type="pathway">
    <text>Glycan biosynthesis; trehalose biosynthesis.</text>
</comment>
<comment type="subcellular location">
    <subcellularLocation>
        <location evidence="1">Cytoplasm</location>
    </subcellularLocation>
</comment>
<comment type="disruption phenotype">
    <text evidence="5">Inactivation of treZ does not affect the production of both capsular alpha-D-glucan and glycogen. Cells lacking this gene are not affected in their multiplication or persistence in the BALB/c mouse infection model.</text>
</comment>
<comment type="similarity">
    <text evidence="6">Belongs to the glycosyl hydrolase 13 family.</text>
</comment>
<proteinExistence type="evidence at protein level"/>
<protein>
    <recommendedName>
        <fullName>Malto-oligosyltrehalose trehalohydrolase</fullName>
        <shortName>MTHase</shortName>
        <ecNumber evidence="2">3.2.1.141</ecNumber>
    </recommendedName>
    <alternativeName>
        <fullName>4-alpha-D-((1-&gt;4)-alpha-D-glucano)trehalose trehalohydrolase</fullName>
    </alternativeName>
    <alternativeName>
        <fullName>Maltooligosyl trehalose trehalohydrolase</fullName>
    </alternativeName>
</protein>
<accession>P9WQ23</accession>
<accession>L0T712</accession>
<accession>Q10769</accession>
<gene>
    <name type="primary">treZ</name>
    <name type="ordered locus">Rv1562c</name>
    <name type="ORF">MTCY48.03</name>
</gene>
<dbReference type="EC" id="3.2.1.141" evidence="2"/>
<dbReference type="EMBL" id="AL123456">
    <property type="protein sequence ID" value="CCP44326.1"/>
    <property type="molecule type" value="Genomic_DNA"/>
</dbReference>
<dbReference type="PIR" id="G70763">
    <property type="entry name" value="G70763"/>
</dbReference>
<dbReference type="RefSeq" id="WP_003407788.1">
    <property type="nucleotide sequence ID" value="NZ_NVQJ01000004.1"/>
</dbReference>
<dbReference type="RefSeq" id="YP_177819.1">
    <property type="nucleotide sequence ID" value="NC_000962.3"/>
</dbReference>
<dbReference type="SMR" id="P9WQ23"/>
<dbReference type="FunCoup" id="P9WQ23">
    <property type="interactions" value="23"/>
</dbReference>
<dbReference type="STRING" id="83332.Rv1562c"/>
<dbReference type="PaxDb" id="83332-Rv1562c"/>
<dbReference type="DNASU" id="886355"/>
<dbReference type="GeneID" id="886355"/>
<dbReference type="KEGG" id="mtu:Rv1562c"/>
<dbReference type="KEGG" id="mtv:RVBD_1562c"/>
<dbReference type="TubercuList" id="Rv1562c"/>
<dbReference type="eggNOG" id="COG0296">
    <property type="taxonomic scope" value="Bacteria"/>
</dbReference>
<dbReference type="InParanoid" id="P9WQ23"/>
<dbReference type="OrthoDB" id="9800174at2"/>
<dbReference type="PhylomeDB" id="P9WQ23"/>
<dbReference type="Reactome" id="R-MTU-868688">
    <property type="pathway name" value="Trehalose biosynthesis"/>
</dbReference>
<dbReference type="UniPathway" id="UPA00299"/>
<dbReference type="Proteomes" id="UP000001584">
    <property type="component" value="Chromosome"/>
</dbReference>
<dbReference type="GO" id="GO:0005829">
    <property type="term" value="C:cytosol"/>
    <property type="evidence" value="ECO:0000304"/>
    <property type="project" value="Reactome"/>
</dbReference>
<dbReference type="GO" id="GO:0033942">
    <property type="term" value="F:4-alpha-D-(1-&gt;4)-alpha-D-glucanotrehalose trehalohydrolase activity"/>
    <property type="evidence" value="ECO:0000314"/>
    <property type="project" value="MTBBASE"/>
</dbReference>
<dbReference type="GO" id="GO:0030980">
    <property type="term" value="P:alpha-glucan catabolic process"/>
    <property type="evidence" value="ECO:0000314"/>
    <property type="project" value="MTBBASE"/>
</dbReference>
<dbReference type="GO" id="GO:0005992">
    <property type="term" value="P:trehalose biosynthetic process"/>
    <property type="evidence" value="ECO:0000314"/>
    <property type="project" value="MTBBASE"/>
</dbReference>
<dbReference type="CDD" id="cd11325">
    <property type="entry name" value="AmyAc_GTHase"/>
    <property type="match status" value="1"/>
</dbReference>
<dbReference type="CDD" id="cd02853">
    <property type="entry name" value="E_set_MTHase_like_N"/>
    <property type="match status" value="1"/>
</dbReference>
<dbReference type="FunFam" id="2.60.40.10:FF:002409">
    <property type="entry name" value="Malto-oligosyltrehalose trehalohydrolase"/>
    <property type="match status" value="1"/>
</dbReference>
<dbReference type="Gene3D" id="1.10.10.760">
    <property type="entry name" value="E-set domains of sugar-utilizing enzymes"/>
    <property type="match status" value="1"/>
</dbReference>
<dbReference type="Gene3D" id="3.20.20.80">
    <property type="entry name" value="Glycosidases"/>
    <property type="match status" value="1"/>
</dbReference>
<dbReference type="Gene3D" id="2.60.40.10">
    <property type="entry name" value="Immunoglobulins"/>
    <property type="match status" value="1"/>
</dbReference>
<dbReference type="InterPro" id="IPR022567">
    <property type="entry name" value="DUF3459"/>
</dbReference>
<dbReference type="InterPro" id="IPR006047">
    <property type="entry name" value="Glyco_hydro_13_cat_dom"/>
</dbReference>
<dbReference type="InterPro" id="IPR017853">
    <property type="entry name" value="Glycoside_hydrolase_SF"/>
</dbReference>
<dbReference type="InterPro" id="IPR013783">
    <property type="entry name" value="Ig-like_fold"/>
</dbReference>
<dbReference type="InterPro" id="IPR014756">
    <property type="entry name" value="Ig_E-set"/>
</dbReference>
<dbReference type="InterPro" id="IPR012768">
    <property type="entry name" value="Trehalose_TreZ"/>
</dbReference>
<dbReference type="InterPro" id="IPR044901">
    <property type="entry name" value="Trehalose_TreZ_E-set_sf"/>
</dbReference>
<dbReference type="NCBIfam" id="TIGR02402">
    <property type="entry name" value="trehalose_TreZ"/>
    <property type="match status" value="1"/>
</dbReference>
<dbReference type="PANTHER" id="PTHR43651">
    <property type="entry name" value="1,4-ALPHA-GLUCAN-BRANCHING ENZYME"/>
    <property type="match status" value="1"/>
</dbReference>
<dbReference type="PANTHER" id="PTHR43651:SF11">
    <property type="entry name" value="MALTO-OLIGOSYLTREHALOSE TREHALOHYDROLASE"/>
    <property type="match status" value="1"/>
</dbReference>
<dbReference type="Pfam" id="PF00128">
    <property type="entry name" value="Alpha-amylase"/>
    <property type="match status" value="1"/>
</dbReference>
<dbReference type="Pfam" id="PF11941">
    <property type="entry name" value="DUF3459"/>
    <property type="match status" value="1"/>
</dbReference>
<dbReference type="PIRSF" id="PIRSF006337">
    <property type="entry name" value="Trehalose_TreZ"/>
    <property type="match status" value="1"/>
</dbReference>
<dbReference type="SMART" id="SM00642">
    <property type="entry name" value="Aamy"/>
    <property type="match status" value="1"/>
</dbReference>
<dbReference type="SUPFAM" id="SSF51445">
    <property type="entry name" value="(Trans)glycosidases"/>
    <property type="match status" value="1"/>
</dbReference>
<dbReference type="SUPFAM" id="SSF81296">
    <property type="entry name" value="E set domains"/>
    <property type="match status" value="1"/>
</dbReference>
<keyword id="KW-0119">Carbohydrate metabolism</keyword>
<keyword id="KW-0963">Cytoplasm</keyword>
<keyword id="KW-0326">Glycosidase</keyword>
<keyword id="KW-0378">Hydrolase</keyword>
<keyword id="KW-1185">Reference proteome</keyword>